<sequence length="114" mass="11735">MPKDSGPLVPLHWLGFGYAALVASGGIIGYAKAGSVPSLAAGLLFGGLAGLGSYQLSQDPKNIWLFLVTSGTLAGIMGMRFYNSRKFMPAGLIAGASLLMVVKLGISALSKPHQ</sequence>
<evidence type="ECO:0000250" key="1"/>
<evidence type="ECO:0000255" key="2"/>
<evidence type="ECO:0000269" key="3">
    <source>
    </source>
</evidence>
<evidence type="ECO:0000305" key="4"/>
<proteinExistence type="evidence at protein level"/>
<dbReference type="EMBL" id="BC102229">
    <property type="protein sequence ID" value="AAI02230.1"/>
    <property type="molecule type" value="mRNA"/>
</dbReference>
<dbReference type="RefSeq" id="NP_001030514.1">
    <property type="nucleotide sequence ID" value="NM_001035437.1"/>
</dbReference>
<dbReference type="FunCoup" id="Q3ZCI1">
    <property type="interactions" value="1855"/>
</dbReference>
<dbReference type="STRING" id="9913.ENSBTAP00000007635"/>
<dbReference type="PaxDb" id="9913-ENSBTAP00000007635"/>
<dbReference type="GeneID" id="613802"/>
<dbReference type="KEGG" id="bta:613802"/>
<dbReference type="CTD" id="51522"/>
<dbReference type="VEuPathDB" id="HostDB:ENSBTAG00000005808"/>
<dbReference type="eggNOG" id="KOG4267">
    <property type="taxonomic scope" value="Eukaryota"/>
</dbReference>
<dbReference type="HOGENOM" id="CLU_096652_4_0_1"/>
<dbReference type="InParanoid" id="Q3ZCI1"/>
<dbReference type="OMA" id="ANSHKIM"/>
<dbReference type="OrthoDB" id="5620at2759"/>
<dbReference type="TreeFam" id="TF323345"/>
<dbReference type="Proteomes" id="UP000009136">
    <property type="component" value="Chromosome 23"/>
</dbReference>
<dbReference type="Bgee" id="ENSBTAG00000005808">
    <property type="expression patterns" value="Expressed in cardiac ventricle and 103 other cell types or tissues"/>
</dbReference>
<dbReference type="GO" id="GO:0031966">
    <property type="term" value="C:mitochondrial membrane"/>
    <property type="evidence" value="ECO:0000318"/>
    <property type="project" value="GO_Central"/>
</dbReference>
<dbReference type="GO" id="GO:0006783">
    <property type="term" value="P:heme biosynthetic process"/>
    <property type="evidence" value="ECO:0007669"/>
    <property type="project" value="UniProtKB-KW"/>
</dbReference>
<dbReference type="GO" id="GO:0070453">
    <property type="term" value="P:regulation of heme biosynthetic process"/>
    <property type="evidence" value="ECO:0000318"/>
    <property type="project" value="GO_Central"/>
</dbReference>
<dbReference type="FunFam" id="1.10.10.1740:FF:000002">
    <property type="entry name" value="Transmembrane protein 14C"/>
    <property type="match status" value="1"/>
</dbReference>
<dbReference type="Gene3D" id="1.10.10.1740">
    <property type="entry name" value="Transmembrane protein 14-like"/>
    <property type="match status" value="1"/>
</dbReference>
<dbReference type="InterPro" id="IPR005349">
    <property type="entry name" value="TMEM14"/>
</dbReference>
<dbReference type="InterPro" id="IPR044890">
    <property type="entry name" value="TMEM14_sf"/>
</dbReference>
<dbReference type="PANTHER" id="PTHR12668">
    <property type="entry name" value="TRANSMEMBRANE PROTEIN 14, 15"/>
    <property type="match status" value="1"/>
</dbReference>
<dbReference type="PANTHER" id="PTHR12668:SF4">
    <property type="entry name" value="TRANSMEMBRANE PROTEIN 14C-RELATED"/>
    <property type="match status" value="1"/>
</dbReference>
<dbReference type="Pfam" id="PF03647">
    <property type="entry name" value="Tmemb_14"/>
    <property type="match status" value="1"/>
</dbReference>
<accession>Q3ZCI1</accession>
<protein>
    <recommendedName>
        <fullName>Transmembrane protein 14C</fullName>
    </recommendedName>
</protein>
<gene>
    <name type="primary">TMEM14C</name>
</gene>
<name>TM14C_BOVIN</name>
<organism>
    <name type="scientific">Bos taurus</name>
    <name type="common">Bovine</name>
    <dbReference type="NCBI Taxonomy" id="9913"/>
    <lineage>
        <taxon>Eukaryota</taxon>
        <taxon>Metazoa</taxon>
        <taxon>Chordata</taxon>
        <taxon>Craniata</taxon>
        <taxon>Vertebrata</taxon>
        <taxon>Euteleostomi</taxon>
        <taxon>Mammalia</taxon>
        <taxon>Eutheria</taxon>
        <taxon>Laurasiatheria</taxon>
        <taxon>Artiodactyla</taxon>
        <taxon>Ruminantia</taxon>
        <taxon>Pecora</taxon>
        <taxon>Bovidae</taxon>
        <taxon>Bovinae</taxon>
        <taxon>Bos</taxon>
    </lineage>
</organism>
<feature type="initiator methionine" description="Removed" evidence="3">
    <location>
        <position position="1"/>
    </location>
</feature>
<feature type="chain" id="PRO_0000328447" description="Transmembrane protein 14C">
    <location>
        <begin position="2"/>
        <end position="114"/>
    </location>
</feature>
<feature type="transmembrane region" description="Helical" evidence="2">
    <location>
        <begin position="8"/>
        <end position="28"/>
    </location>
</feature>
<feature type="transmembrane region" description="Helical" evidence="2">
    <location>
        <begin position="33"/>
        <end position="53"/>
    </location>
</feature>
<feature type="transmembrane region" description="Helical" evidence="2">
    <location>
        <begin position="62"/>
        <end position="82"/>
    </location>
</feature>
<feature type="transmembrane region" description="Helical" evidence="2">
    <location>
        <begin position="87"/>
        <end position="107"/>
    </location>
</feature>
<keyword id="KW-0350">Heme biosynthesis</keyword>
<keyword id="KW-0472">Membrane</keyword>
<keyword id="KW-0496">Mitochondrion</keyword>
<keyword id="KW-1185">Reference proteome</keyword>
<keyword id="KW-0812">Transmembrane</keyword>
<keyword id="KW-1133">Transmembrane helix</keyword>
<reference key="1">
    <citation type="submission" date="2005-08" db="EMBL/GenBank/DDBJ databases">
        <authorList>
            <consortium name="NIH - Mammalian Gene Collection (MGC) project"/>
        </authorList>
    </citation>
    <scope>NUCLEOTIDE SEQUENCE [LARGE SCALE MRNA]</scope>
    <source>
        <strain>Crossbred X Angus</strain>
        <tissue>Ileum</tissue>
    </source>
</reference>
<reference key="2">
    <citation type="journal article" date="2006" name="Proc. Natl. Acad. Sci. U.S.A.">
        <title>Definition of the mitochondrial proteome by measurement of molecular masses of membrane proteins.</title>
        <authorList>
            <person name="Carroll J."/>
            <person name="Fearnley I.M."/>
            <person name="Walker J.E."/>
        </authorList>
    </citation>
    <scope>CLEAVAGE OF INITIATOR METHIONINE</scope>
    <scope>SUBCELLULAR LOCATION</scope>
    <scope>MASS SPECTROMETRY</scope>
</reference>
<comment type="function">
    <text evidence="1">Required for normal heme biosynthesis.</text>
</comment>
<comment type="subcellular location">
    <subcellularLocation>
        <location evidence="3">Mitochondrion membrane</location>
        <topology evidence="3">Multi-pass membrane protein</topology>
    </subcellularLocation>
</comment>
<comment type="mass spectrometry" mass="11604.4" method="Electrospray" evidence="3"/>
<comment type="similarity">
    <text evidence="4">Belongs to the TMEM14 family.</text>
</comment>